<feature type="chain" id="PRO_0000362331" description="ATP synthase subunit a">
    <location>
        <begin position="1"/>
        <end position="226"/>
    </location>
</feature>
<feature type="transmembrane region" description="Helical" evidence="1">
    <location>
        <begin position="18"/>
        <end position="38"/>
    </location>
</feature>
<feature type="transmembrane region" description="Helical" evidence="1">
    <location>
        <begin position="79"/>
        <end position="99"/>
    </location>
</feature>
<feature type="transmembrane region" description="Helical" evidence="1">
    <location>
        <begin position="105"/>
        <end position="125"/>
    </location>
</feature>
<feature type="transmembrane region" description="Helical" evidence="1">
    <location>
        <begin position="134"/>
        <end position="154"/>
    </location>
</feature>
<feature type="transmembrane region" description="Helical" evidence="1">
    <location>
        <begin position="179"/>
        <end position="199"/>
    </location>
</feature>
<feature type="transmembrane region" description="Helical" evidence="1">
    <location>
        <begin position="201"/>
        <end position="221"/>
    </location>
</feature>
<sequence>MEHRVFTIANFFSSNHDFITGFFVVLTAVLMFLISLGASRKMQMVPMGLQNVYESIISAILSVAKDIIGEELARKYFPLAGTIALYVFFSNMIGIIPGFESPTASWSFTLVLALIVFFYYHFEGIRVQGFFKYFAHFAGPVKWLAPFMFPIEIISHFSRIVSLSFRLFGNIKGDDMFLLIMLLLVPWAVPVAPFMVLFFMGILQAFVFMILTYVYLAGAVLTDEGH</sequence>
<reference key="1">
    <citation type="submission" date="2008-05" db="EMBL/GenBank/DDBJ databases">
        <title>Genome sequence of Helicobacter pylori from the remote Amazon: traces of Asian ancestry of the first Americans.</title>
        <authorList>
            <person name="Kersulyte D."/>
            <person name="Kalia A."/>
            <person name="Gilman R.H."/>
            <person name="Berg D.E."/>
        </authorList>
    </citation>
    <scope>NUCLEOTIDE SEQUENCE [LARGE SCALE GENOMIC DNA]</scope>
    <source>
        <strain>Shi470</strain>
    </source>
</reference>
<protein>
    <recommendedName>
        <fullName evidence="1">ATP synthase subunit a</fullName>
    </recommendedName>
    <alternativeName>
        <fullName evidence="1">ATP synthase F0 sector subunit a</fullName>
    </alternativeName>
    <alternativeName>
        <fullName evidence="1">F-ATPase subunit 6</fullName>
    </alternativeName>
</protein>
<dbReference type="EMBL" id="CP001072">
    <property type="protein sequence ID" value="ACD47982.1"/>
    <property type="molecule type" value="Genomic_DNA"/>
</dbReference>
<dbReference type="RefSeq" id="WP_000401225.1">
    <property type="nucleotide sequence ID" value="NC_010698.2"/>
</dbReference>
<dbReference type="SMR" id="B2UT00"/>
<dbReference type="KEGG" id="hps:HPSH_02660"/>
<dbReference type="HOGENOM" id="CLU_041018_2_2_7"/>
<dbReference type="GO" id="GO:0005886">
    <property type="term" value="C:plasma membrane"/>
    <property type="evidence" value="ECO:0007669"/>
    <property type="project" value="UniProtKB-SubCell"/>
</dbReference>
<dbReference type="GO" id="GO:0045259">
    <property type="term" value="C:proton-transporting ATP synthase complex"/>
    <property type="evidence" value="ECO:0007669"/>
    <property type="project" value="UniProtKB-KW"/>
</dbReference>
<dbReference type="GO" id="GO:0046933">
    <property type="term" value="F:proton-transporting ATP synthase activity, rotational mechanism"/>
    <property type="evidence" value="ECO:0007669"/>
    <property type="project" value="UniProtKB-UniRule"/>
</dbReference>
<dbReference type="GO" id="GO:0042777">
    <property type="term" value="P:proton motive force-driven plasma membrane ATP synthesis"/>
    <property type="evidence" value="ECO:0007669"/>
    <property type="project" value="TreeGrafter"/>
</dbReference>
<dbReference type="CDD" id="cd00310">
    <property type="entry name" value="ATP-synt_Fo_a_6"/>
    <property type="match status" value="1"/>
</dbReference>
<dbReference type="FunFam" id="1.20.120.220:FF:000006">
    <property type="entry name" value="ATP synthase subunit a"/>
    <property type="match status" value="1"/>
</dbReference>
<dbReference type="Gene3D" id="1.20.120.220">
    <property type="entry name" value="ATP synthase, F0 complex, subunit A"/>
    <property type="match status" value="1"/>
</dbReference>
<dbReference type="HAMAP" id="MF_01393">
    <property type="entry name" value="ATP_synth_a_bact"/>
    <property type="match status" value="1"/>
</dbReference>
<dbReference type="InterPro" id="IPR045082">
    <property type="entry name" value="ATP_syn_F0_a_bact/chloroplast"/>
</dbReference>
<dbReference type="InterPro" id="IPR000568">
    <property type="entry name" value="ATP_synth_F0_asu"/>
</dbReference>
<dbReference type="InterPro" id="IPR023011">
    <property type="entry name" value="ATP_synth_F0_asu_AS"/>
</dbReference>
<dbReference type="InterPro" id="IPR035908">
    <property type="entry name" value="F0_ATP_A_sf"/>
</dbReference>
<dbReference type="NCBIfam" id="TIGR01131">
    <property type="entry name" value="ATP_synt_6_or_A"/>
    <property type="match status" value="1"/>
</dbReference>
<dbReference type="NCBIfam" id="NF004481">
    <property type="entry name" value="PRK05815.2-3"/>
    <property type="match status" value="1"/>
</dbReference>
<dbReference type="PANTHER" id="PTHR42823">
    <property type="entry name" value="ATP SYNTHASE SUBUNIT A, CHLOROPLASTIC"/>
    <property type="match status" value="1"/>
</dbReference>
<dbReference type="PANTHER" id="PTHR42823:SF3">
    <property type="entry name" value="ATP SYNTHASE SUBUNIT A, CHLOROPLASTIC"/>
    <property type="match status" value="1"/>
</dbReference>
<dbReference type="Pfam" id="PF00119">
    <property type="entry name" value="ATP-synt_A"/>
    <property type="match status" value="1"/>
</dbReference>
<dbReference type="PRINTS" id="PR00123">
    <property type="entry name" value="ATPASEA"/>
</dbReference>
<dbReference type="SUPFAM" id="SSF81336">
    <property type="entry name" value="F1F0 ATP synthase subunit A"/>
    <property type="match status" value="1"/>
</dbReference>
<dbReference type="PROSITE" id="PS00449">
    <property type="entry name" value="ATPASE_A"/>
    <property type="match status" value="1"/>
</dbReference>
<organism>
    <name type="scientific">Helicobacter pylori (strain Shi470)</name>
    <dbReference type="NCBI Taxonomy" id="512562"/>
    <lineage>
        <taxon>Bacteria</taxon>
        <taxon>Pseudomonadati</taxon>
        <taxon>Campylobacterota</taxon>
        <taxon>Epsilonproteobacteria</taxon>
        <taxon>Campylobacterales</taxon>
        <taxon>Helicobacteraceae</taxon>
        <taxon>Helicobacter</taxon>
    </lineage>
</organism>
<comment type="function">
    <text evidence="1">Key component of the proton channel; it plays a direct role in the translocation of protons across the membrane.</text>
</comment>
<comment type="subunit">
    <text evidence="1">F-type ATPases have 2 components, CF(1) - the catalytic core - and CF(0) - the membrane proton channel. CF(1) has five subunits: alpha(3), beta(3), gamma(1), delta(1), epsilon(1). CF(0) has three main subunits: a(1), b(2) and c(9-12). The alpha and beta chains form an alternating ring which encloses part of the gamma chain. CF(1) is attached to CF(0) by a central stalk formed by the gamma and epsilon chains, while a peripheral stalk is formed by the delta and b chains.</text>
</comment>
<comment type="subcellular location">
    <subcellularLocation>
        <location evidence="1">Cell inner membrane</location>
        <topology evidence="1">Multi-pass membrane protein</topology>
    </subcellularLocation>
</comment>
<comment type="similarity">
    <text evidence="1">Belongs to the ATPase A chain family.</text>
</comment>
<accession>B2UT00</accession>
<keyword id="KW-0066">ATP synthesis</keyword>
<keyword id="KW-0997">Cell inner membrane</keyword>
<keyword id="KW-1003">Cell membrane</keyword>
<keyword id="KW-0138">CF(0)</keyword>
<keyword id="KW-0375">Hydrogen ion transport</keyword>
<keyword id="KW-0406">Ion transport</keyword>
<keyword id="KW-0472">Membrane</keyword>
<keyword id="KW-0812">Transmembrane</keyword>
<keyword id="KW-1133">Transmembrane helix</keyword>
<keyword id="KW-0813">Transport</keyword>
<name>ATP6_HELPS</name>
<evidence type="ECO:0000255" key="1">
    <source>
        <dbReference type="HAMAP-Rule" id="MF_01393"/>
    </source>
</evidence>
<proteinExistence type="inferred from homology"/>
<gene>
    <name evidence="1" type="primary">atpB</name>
    <name type="ordered locus">HPSH_02660</name>
</gene>